<sequence length="491" mass="53713">MKLHTLVSCLHDFPVVPKENPEITSIEADSRKVKEGSLFVCMKGYTVDSHDFAKQAAAQGAAAIVAERPIDVDVPVVLVKNTFRSLAVLADYFYGQPTHKLHLIGITGTNGKTTTSHIMDEIMRAHGHKTGLIGTINMKIGDETFEVKNTTPDALTLQQTFSKMVEQGVDSTVMEVSSHALDLGRVHGCDYDVAVFTNLTQDHLDYHKTMEEYKHAKGLLFAQLGNSYNHNREKYAVLNSDDNVTEEYMRSTAATVVTYGIDTTSDIMAKNIVMTSGGTTFTLVTPYESVNVTMKLIGKFNVYNVLAATAAGLVSGVKLETIIAVIKDLAGVPGRFEVVDGGQNYTVIVDYAHTPDSLENVLKTAKQFAKGDVYCIVGCGGDRDRTKRPIMASVATKYATHAIYTSDNPRSEDPAAILDDMVHGASGKNYEMIIDRKEAIHHAIAKAKADDIIIIAGKGHETYQIIGKEVHHFDDREVAKEAITGRLNNEE</sequence>
<evidence type="ECO:0000255" key="1">
    <source>
        <dbReference type="HAMAP-Rule" id="MF_00208"/>
    </source>
</evidence>
<evidence type="ECO:0000269" key="2">
    <source>
    </source>
</evidence>
<feature type="chain" id="PRO_0000101864" description="UDP-N-acetylmuramoyl-L-alanyl-D-glutamate--2,6-diaminopimelate ligase">
    <location>
        <begin position="1"/>
        <end position="491"/>
    </location>
</feature>
<feature type="short sequence motif" description="Meso-diaminopimelate recognition motif">
    <location>
        <begin position="407"/>
        <end position="410"/>
    </location>
</feature>
<feature type="binding site" evidence="1">
    <location>
        <position position="30"/>
    </location>
    <ligand>
        <name>UDP-N-acetyl-alpha-D-muramoyl-L-alanyl-D-glutamate</name>
        <dbReference type="ChEBI" id="CHEBI:83900"/>
    </ligand>
</feature>
<feature type="binding site" evidence="1">
    <location>
        <begin position="108"/>
        <end position="114"/>
    </location>
    <ligand>
        <name>ATP</name>
        <dbReference type="ChEBI" id="CHEBI:30616"/>
    </ligand>
</feature>
<feature type="binding site" evidence="1">
    <location>
        <position position="149"/>
    </location>
    <ligand>
        <name>UDP-N-acetyl-alpha-D-muramoyl-L-alanyl-D-glutamate</name>
        <dbReference type="ChEBI" id="CHEBI:83900"/>
    </ligand>
</feature>
<feature type="binding site" evidence="1">
    <location>
        <begin position="150"/>
        <end position="151"/>
    </location>
    <ligand>
        <name>UDP-N-acetyl-alpha-D-muramoyl-L-alanyl-D-glutamate</name>
        <dbReference type="ChEBI" id="CHEBI:83900"/>
    </ligand>
</feature>
<feature type="binding site" evidence="1">
    <location>
        <position position="177"/>
    </location>
    <ligand>
        <name>UDP-N-acetyl-alpha-D-muramoyl-L-alanyl-D-glutamate</name>
        <dbReference type="ChEBI" id="CHEBI:83900"/>
    </ligand>
</feature>
<feature type="binding site" evidence="1">
    <location>
        <position position="185"/>
    </location>
    <ligand>
        <name>UDP-N-acetyl-alpha-D-muramoyl-L-alanyl-D-glutamate</name>
        <dbReference type="ChEBI" id="CHEBI:83900"/>
    </ligand>
</feature>
<feature type="binding site" evidence="1">
    <location>
        <position position="383"/>
    </location>
    <ligand>
        <name>meso-2,6-diaminopimelate</name>
        <dbReference type="ChEBI" id="CHEBI:57791"/>
    </ligand>
</feature>
<feature type="binding site" evidence="1">
    <location>
        <begin position="407"/>
        <end position="410"/>
    </location>
    <ligand>
        <name>meso-2,6-diaminopimelate</name>
        <dbReference type="ChEBI" id="CHEBI:57791"/>
    </ligand>
</feature>
<feature type="binding site" evidence="1">
    <location>
        <position position="457"/>
    </location>
    <ligand>
        <name>meso-2,6-diaminopimelate</name>
        <dbReference type="ChEBI" id="CHEBI:57791"/>
    </ligand>
</feature>
<feature type="binding site" evidence="1">
    <location>
        <position position="461"/>
    </location>
    <ligand>
        <name>meso-2,6-diaminopimelate</name>
        <dbReference type="ChEBI" id="CHEBI:57791"/>
    </ligand>
</feature>
<feature type="modified residue" description="N6-carboxylysine" evidence="1">
    <location>
        <position position="217"/>
    </location>
</feature>
<proteinExistence type="evidence at protein level"/>
<reference key="1">
    <citation type="journal article" date="2003" name="Nature">
        <title>Genome sequence of Bacillus cereus and comparative analysis with Bacillus anthracis.</title>
        <authorList>
            <person name="Ivanova N."/>
            <person name="Sorokin A."/>
            <person name="Anderson I."/>
            <person name="Galleron N."/>
            <person name="Candelon B."/>
            <person name="Kapatral V."/>
            <person name="Bhattacharyya A."/>
            <person name="Reznik G."/>
            <person name="Mikhailova N."/>
            <person name="Lapidus A."/>
            <person name="Chu L."/>
            <person name="Mazur M."/>
            <person name="Goltsman E."/>
            <person name="Larsen N."/>
            <person name="D'Souza M."/>
            <person name="Walunas T."/>
            <person name="Grechkin Y."/>
            <person name="Pusch G."/>
            <person name="Haselkorn R."/>
            <person name="Fonstein M."/>
            <person name="Ehrlich S.D."/>
            <person name="Overbeek R."/>
            <person name="Kyrpides N.C."/>
        </authorList>
    </citation>
    <scope>NUCLEOTIDE SEQUENCE [LARGE SCALE GENOMIC DNA]</scope>
    <source>
        <strain>ATCC 14579 / DSM 31 / CCUG 7414 / JCM 2152 / NBRC 15305 / NCIMB 9373 / NCTC 2599 / NRRL B-3711</strain>
    </source>
</reference>
<reference key="2">
    <citation type="journal article" date="1968" name="J. Biol. Chem.">
        <title>Purification and properties of uridine diphosphate N-acetylmuramyl-L-alanyl-D-glutamate:meso-2,6-diaminopimelate ligase.</title>
        <authorList>
            <person name="Mizuno Y."/>
            <person name="Ito E."/>
        </authorList>
    </citation>
    <scope>FUNCTION</scope>
    <scope>CATALYTIC ACTIVITY</scope>
    <scope>SUBSTRATE SPECIFICITY</scope>
    <scope>BIOPHYSICOCHEMICAL PROPERTIES</scope>
    <scope>COFACTOR</scope>
</reference>
<comment type="function">
    <text evidence="1 2">Catalyzes the addition of meso-diaminopimelic acid to the nucleotide precursor UDP-N-acetylmuramoyl-L-alanyl-D-glutamate (UMAG) in the biosynthesis of bacterial cell-wall peptidoglycan.</text>
</comment>
<comment type="catalytic activity">
    <reaction evidence="1 2">
        <text>UDP-N-acetyl-alpha-D-muramoyl-L-alanyl-D-glutamate + meso-2,6-diaminopimelate + ATP = UDP-N-acetyl-alpha-D-muramoyl-L-alanyl-gamma-D-glutamyl-meso-2,6-diaminopimelate + ADP + phosphate + H(+)</text>
        <dbReference type="Rhea" id="RHEA:23676"/>
        <dbReference type="ChEBI" id="CHEBI:15378"/>
        <dbReference type="ChEBI" id="CHEBI:30616"/>
        <dbReference type="ChEBI" id="CHEBI:43474"/>
        <dbReference type="ChEBI" id="CHEBI:57791"/>
        <dbReference type="ChEBI" id="CHEBI:83900"/>
        <dbReference type="ChEBI" id="CHEBI:83905"/>
        <dbReference type="ChEBI" id="CHEBI:456216"/>
        <dbReference type="EC" id="6.3.2.13"/>
    </reaction>
</comment>
<comment type="cofactor">
    <cofactor evidence="1 2">
        <name>Mg(2+)</name>
        <dbReference type="ChEBI" id="CHEBI:18420"/>
    </cofactor>
</comment>
<comment type="biophysicochemical properties">
    <kinetics>
        <KM evidence="2">0.13 mM for meso-2,6-diaminoheptanedioate</KM>
        <KM evidence="2">0.32 mM for UDP-N-acetyl-alpha-D-muramoyl-L-alanyl-D-glutamate</KM>
        <KM evidence="2">0.34 mM for ATP</KM>
    </kinetics>
    <phDependence>
        <text evidence="2">Optimum pH is 8.5.</text>
    </phDependence>
</comment>
<comment type="pathway">
    <text evidence="1">Cell wall biogenesis; peptidoglycan biosynthesis.</text>
</comment>
<comment type="subcellular location">
    <subcellularLocation>
        <location evidence="1">Cytoplasm</location>
    </subcellularLocation>
</comment>
<comment type="PTM">
    <text evidence="1">Carboxylation is probably crucial for Mg(2+) binding and, consequently, for the gamma-phosphate positioning of ATP.</text>
</comment>
<comment type="similarity">
    <text evidence="1">Belongs to the MurCDEF family. MurE subfamily.</text>
</comment>
<gene>
    <name evidence="1" type="primary">murE</name>
    <name type="ordered locus">BC_3914</name>
</gene>
<dbReference type="EC" id="6.3.2.13" evidence="1 2"/>
<dbReference type="EMBL" id="AE016877">
    <property type="protein sequence ID" value="AAP10835.1"/>
    <property type="molecule type" value="Genomic_DNA"/>
</dbReference>
<dbReference type="RefSeq" id="NP_833634.1">
    <property type="nucleotide sequence ID" value="NC_004722.1"/>
</dbReference>
<dbReference type="RefSeq" id="WP_000766313.1">
    <property type="nucleotide sequence ID" value="NZ_CP138336.1"/>
</dbReference>
<dbReference type="SMR" id="Q819Q0"/>
<dbReference type="STRING" id="226900.BC_3914"/>
<dbReference type="MetOSite" id="Q819Q0"/>
<dbReference type="KEGG" id="bce:BC3914"/>
<dbReference type="PATRIC" id="fig|226900.8.peg.4036"/>
<dbReference type="HOGENOM" id="CLU_022291_4_0_9"/>
<dbReference type="OrthoDB" id="9800958at2"/>
<dbReference type="UniPathway" id="UPA00219"/>
<dbReference type="Proteomes" id="UP000001417">
    <property type="component" value="Chromosome"/>
</dbReference>
<dbReference type="GO" id="GO:0005737">
    <property type="term" value="C:cytoplasm"/>
    <property type="evidence" value="ECO:0007669"/>
    <property type="project" value="UniProtKB-SubCell"/>
</dbReference>
<dbReference type="GO" id="GO:0005524">
    <property type="term" value="F:ATP binding"/>
    <property type="evidence" value="ECO:0007669"/>
    <property type="project" value="UniProtKB-UniRule"/>
</dbReference>
<dbReference type="GO" id="GO:0000287">
    <property type="term" value="F:magnesium ion binding"/>
    <property type="evidence" value="ECO:0007669"/>
    <property type="project" value="UniProtKB-UniRule"/>
</dbReference>
<dbReference type="GO" id="GO:0008765">
    <property type="term" value="F:UDP-N-acetylmuramoylalanyl-D-glutamate-2,6-diaminopimelate ligase activity"/>
    <property type="evidence" value="ECO:0007669"/>
    <property type="project" value="UniProtKB-UniRule"/>
</dbReference>
<dbReference type="GO" id="GO:0051301">
    <property type="term" value="P:cell division"/>
    <property type="evidence" value="ECO:0007669"/>
    <property type="project" value="UniProtKB-KW"/>
</dbReference>
<dbReference type="GO" id="GO:0071555">
    <property type="term" value="P:cell wall organization"/>
    <property type="evidence" value="ECO:0007669"/>
    <property type="project" value="UniProtKB-KW"/>
</dbReference>
<dbReference type="GO" id="GO:0009252">
    <property type="term" value="P:peptidoglycan biosynthetic process"/>
    <property type="evidence" value="ECO:0007669"/>
    <property type="project" value="UniProtKB-UniRule"/>
</dbReference>
<dbReference type="GO" id="GO:0008360">
    <property type="term" value="P:regulation of cell shape"/>
    <property type="evidence" value="ECO:0007669"/>
    <property type="project" value="UniProtKB-KW"/>
</dbReference>
<dbReference type="FunFam" id="3.40.1190.10:FF:000013">
    <property type="entry name" value="UDP-N-acetylmuramoyl-L-alanyl-D-glutamate--2,6-diaminopimelate ligase"/>
    <property type="match status" value="1"/>
</dbReference>
<dbReference type="FunFam" id="3.40.1390.10:FF:000005">
    <property type="entry name" value="UDP-N-acetylmuramoyl-L-alanyl-D-glutamate--2,6-diaminopimelate ligase"/>
    <property type="match status" value="1"/>
</dbReference>
<dbReference type="FunFam" id="3.90.190.20:FF:000006">
    <property type="entry name" value="UDP-N-acetylmuramoyl-L-alanyl-D-glutamate--2,6-diaminopimelate ligase"/>
    <property type="match status" value="1"/>
</dbReference>
<dbReference type="Gene3D" id="3.90.190.20">
    <property type="entry name" value="Mur ligase, C-terminal domain"/>
    <property type="match status" value="1"/>
</dbReference>
<dbReference type="Gene3D" id="3.40.1190.10">
    <property type="entry name" value="Mur-like, catalytic domain"/>
    <property type="match status" value="1"/>
</dbReference>
<dbReference type="Gene3D" id="3.40.1390.10">
    <property type="entry name" value="MurE/MurF, N-terminal domain"/>
    <property type="match status" value="1"/>
</dbReference>
<dbReference type="HAMAP" id="MF_00208">
    <property type="entry name" value="MurE"/>
    <property type="match status" value="1"/>
</dbReference>
<dbReference type="InterPro" id="IPR036565">
    <property type="entry name" value="Mur-like_cat_sf"/>
</dbReference>
<dbReference type="InterPro" id="IPR004101">
    <property type="entry name" value="Mur_ligase_C"/>
</dbReference>
<dbReference type="InterPro" id="IPR036615">
    <property type="entry name" value="Mur_ligase_C_dom_sf"/>
</dbReference>
<dbReference type="InterPro" id="IPR013221">
    <property type="entry name" value="Mur_ligase_cen"/>
</dbReference>
<dbReference type="InterPro" id="IPR000713">
    <property type="entry name" value="Mur_ligase_N"/>
</dbReference>
<dbReference type="InterPro" id="IPR035911">
    <property type="entry name" value="MurE/MurF_N"/>
</dbReference>
<dbReference type="InterPro" id="IPR005761">
    <property type="entry name" value="UDP-N-AcMur-Glu-dNH2Pim_ligase"/>
</dbReference>
<dbReference type="NCBIfam" id="TIGR01085">
    <property type="entry name" value="murE"/>
    <property type="match status" value="1"/>
</dbReference>
<dbReference type="NCBIfam" id="NF001124">
    <property type="entry name" value="PRK00139.1-2"/>
    <property type="match status" value="1"/>
</dbReference>
<dbReference type="NCBIfam" id="NF001126">
    <property type="entry name" value="PRK00139.1-4"/>
    <property type="match status" value="1"/>
</dbReference>
<dbReference type="PANTHER" id="PTHR23135">
    <property type="entry name" value="MUR LIGASE FAMILY MEMBER"/>
    <property type="match status" value="1"/>
</dbReference>
<dbReference type="PANTHER" id="PTHR23135:SF4">
    <property type="entry name" value="UDP-N-ACETYLMURAMOYL-L-ALANYL-D-GLUTAMATE--2,6-DIAMINOPIMELATE LIGASE MURE HOMOLOG, CHLOROPLASTIC"/>
    <property type="match status" value="1"/>
</dbReference>
<dbReference type="Pfam" id="PF01225">
    <property type="entry name" value="Mur_ligase"/>
    <property type="match status" value="1"/>
</dbReference>
<dbReference type="Pfam" id="PF02875">
    <property type="entry name" value="Mur_ligase_C"/>
    <property type="match status" value="1"/>
</dbReference>
<dbReference type="Pfam" id="PF08245">
    <property type="entry name" value="Mur_ligase_M"/>
    <property type="match status" value="1"/>
</dbReference>
<dbReference type="SUPFAM" id="SSF53623">
    <property type="entry name" value="MurD-like peptide ligases, catalytic domain"/>
    <property type="match status" value="1"/>
</dbReference>
<dbReference type="SUPFAM" id="SSF53244">
    <property type="entry name" value="MurD-like peptide ligases, peptide-binding domain"/>
    <property type="match status" value="1"/>
</dbReference>
<dbReference type="SUPFAM" id="SSF63418">
    <property type="entry name" value="MurE/MurF N-terminal domain"/>
    <property type="match status" value="1"/>
</dbReference>
<accession>Q819Q0</accession>
<organism>
    <name type="scientific">Bacillus cereus (strain ATCC 14579 / DSM 31 / CCUG 7414 / JCM 2152 / NBRC 15305 / NCIMB 9373 / NCTC 2599 / NRRL B-3711)</name>
    <dbReference type="NCBI Taxonomy" id="226900"/>
    <lineage>
        <taxon>Bacteria</taxon>
        <taxon>Bacillati</taxon>
        <taxon>Bacillota</taxon>
        <taxon>Bacilli</taxon>
        <taxon>Bacillales</taxon>
        <taxon>Bacillaceae</taxon>
        <taxon>Bacillus</taxon>
        <taxon>Bacillus cereus group</taxon>
    </lineage>
</organism>
<keyword id="KW-0067">ATP-binding</keyword>
<keyword id="KW-0131">Cell cycle</keyword>
<keyword id="KW-0132">Cell division</keyword>
<keyword id="KW-0133">Cell shape</keyword>
<keyword id="KW-0961">Cell wall biogenesis/degradation</keyword>
<keyword id="KW-0963">Cytoplasm</keyword>
<keyword id="KW-0436">Ligase</keyword>
<keyword id="KW-0460">Magnesium</keyword>
<keyword id="KW-0547">Nucleotide-binding</keyword>
<keyword id="KW-0573">Peptidoglycan synthesis</keyword>
<keyword id="KW-1185">Reference proteome</keyword>
<name>MURE_BACCR</name>
<protein>
    <recommendedName>
        <fullName evidence="1">UDP-N-acetylmuramoyl-L-alanyl-D-glutamate--2,6-diaminopimelate ligase</fullName>
        <ecNumber evidence="1 2">6.3.2.13</ecNumber>
    </recommendedName>
    <alternativeName>
        <fullName evidence="1">Meso-A2pm-adding enzyme</fullName>
    </alternativeName>
    <alternativeName>
        <fullName evidence="1">Meso-diaminopimelate-adding enzyme</fullName>
    </alternativeName>
    <alternativeName>
        <fullName evidence="1">UDP-MurNAc-L-Ala-D-Glu:meso-diaminopimelate ligase</fullName>
    </alternativeName>
    <alternativeName>
        <fullName evidence="1">UDP-MurNAc-tripeptide synthetase</fullName>
    </alternativeName>
    <alternativeName>
        <fullName evidence="1">UDP-N-acetylmuramyl-tripeptide synthetase</fullName>
    </alternativeName>
</protein>